<gene>
    <name evidence="1" type="primary">fusA</name>
    <name type="ordered locus">MMOB3670</name>
</gene>
<sequence length="694" mass="76916">MIIMAREFELKDYRNIGIMAHIDAGKTTTTERILFHTGKIHKIGETHEGASQMDWMPQEQERGITITSAATTAFWKGKRINIIDTPGHVDFTVEVERSLRVLDGAVAVLDAQSGVEPQTETVWRQATNYKVPRIVFVNKMDKAGANFDEAVKSVRTRLGGNAVPIQWNIGAESEFQGFIDLVNMEAWIFDGKAEENGQKIAIPTNLVKIAKEKRQELIDAVANYEEDIMMLALEGQDVDNETLKKAIRKATLTSEFFPAVCGSAFKNKGVKAMIDAVIDYLPSPLDVPAIEAHQGENIITVKPSDDGDFSALAFKVMTDPYVGTLTFFRVYSGILNKGSYVINSTKEKKERIGRILQMHANSRTEIEEVRTGDIAAAVGLKDTTTGDTLIGEKAKMFILEKMIFPEPVISQALEPATKAATEKLSLGLQKLSGEDPTFKTYTNEETGQTIIAGMGELHLDIIVDRLRREFGVEVNVGAPQVSYRETITATAEIEGKHIKQSGGKGQYGHVWIKFEPNHDKGFEFVDKIVGGKIPKEYIKHVQKGLEEKMEIGILAGYPLIDVKATLFDGSYHDVDSSELAYKIAASKALTDGKSKLGATLLEPIMNVDVVIPEDYFGDIMGDLSRRRGQIKETKTRSDGASTIKANVPLSEMFGYATDLRSMTAGRGNYQMIFNHYEKAPKNISDEIIKKRNFN</sequence>
<protein>
    <recommendedName>
        <fullName evidence="1">Elongation factor G</fullName>
        <shortName evidence="1">EF-G</shortName>
    </recommendedName>
</protein>
<keyword id="KW-0963">Cytoplasm</keyword>
<keyword id="KW-0251">Elongation factor</keyword>
<keyword id="KW-0342">GTP-binding</keyword>
<keyword id="KW-0547">Nucleotide-binding</keyword>
<keyword id="KW-0648">Protein biosynthesis</keyword>
<keyword id="KW-1185">Reference proteome</keyword>
<feature type="chain" id="PRO_0000091159" description="Elongation factor G">
    <location>
        <begin position="1"/>
        <end position="694"/>
    </location>
</feature>
<feature type="domain" description="tr-type G">
    <location>
        <begin position="11"/>
        <end position="285"/>
    </location>
</feature>
<feature type="binding site" evidence="1">
    <location>
        <begin position="20"/>
        <end position="27"/>
    </location>
    <ligand>
        <name>GTP</name>
        <dbReference type="ChEBI" id="CHEBI:37565"/>
    </ligand>
</feature>
<feature type="binding site" evidence="1">
    <location>
        <begin position="84"/>
        <end position="88"/>
    </location>
    <ligand>
        <name>GTP</name>
        <dbReference type="ChEBI" id="CHEBI:37565"/>
    </ligand>
</feature>
<feature type="binding site" evidence="1">
    <location>
        <begin position="138"/>
        <end position="141"/>
    </location>
    <ligand>
        <name>GTP</name>
        <dbReference type="ChEBI" id="CHEBI:37565"/>
    </ligand>
</feature>
<accession>Q6KHS5</accession>
<organism>
    <name type="scientific">Mycoplasma mobile (strain ATCC 43663 / 163K / NCTC 11711)</name>
    <name type="common">Mesomycoplasma mobile</name>
    <dbReference type="NCBI Taxonomy" id="267748"/>
    <lineage>
        <taxon>Bacteria</taxon>
        <taxon>Bacillati</taxon>
        <taxon>Mycoplasmatota</taxon>
        <taxon>Mycoplasmoidales</taxon>
        <taxon>Metamycoplasmataceae</taxon>
        <taxon>Mesomycoplasma</taxon>
    </lineage>
</organism>
<proteinExistence type="inferred from homology"/>
<reference key="1">
    <citation type="journal article" date="2004" name="Genome Res.">
        <title>The complete genome and proteome of Mycoplasma mobile.</title>
        <authorList>
            <person name="Jaffe J.D."/>
            <person name="Stange-Thomann N."/>
            <person name="Smith C."/>
            <person name="DeCaprio D."/>
            <person name="Fisher S."/>
            <person name="Butler J."/>
            <person name="Calvo S."/>
            <person name="Elkins T."/>
            <person name="FitzGerald M.G."/>
            <person name="Hafez N."/>
            <person name="Kodira C.D."/>
            <person name="Major J."/>
            <person name="Wang S."/>
            <person name="Wilkinson J."/>
            <person name="Nicol R."/>
            <person name="Nusbaum C."/>
            <person name="Birren B."/>
            <person name="Berg H.C."/>
            <person name="Church G.M."/>
        </authorList>
    </citation>
    <scope>NUCLEOTIDE SEQUENCE [LARGE SCALE GENOMIC DNA]</scope>
    <source>
        <strain>ATCC 43663 / NCTC 11711 / 163 K</strain>
    </source>
</reference>
<comment type="function">
    <text evidence="1">Catalyzes the GTP-dependent ribosomal translocation step during translation elongation. During this step, the ribosome changes from the pre-translocational (PRE) to the post-translocational (POST) state as the newly formed A-site-bound peptidyl-tRNA and P-site-bound deacylated tRNA move to the P and E sites, respectively. Catalyzes the coordinated movement of the two tRNA molecules, the mRNA and conformational changes in the ribosome.</text>
</comment>
<comment type="subcellular location">
    <subcellularLocation>
        <location evidence="1">Cytoplasm</location>
    </subcellularLocation>
</comment>
<comment type="similarity">
    <text evidence="1">Belongs to the TRAFAC class translation factor GTPase superfamily. Classic translation factor GTPase family. EF-G/EF-2 subfamily.</text>
</comment>
<evidence type="ECO:0000255" key="1">
    <source>
        <dbReference type="HAMAP-Rule" id="MF_00054"/>
    </source>
</evidence>
<name>EFG_MYCM1</name>
<dbReference type="EMBL" id="AE017308">
    <property type="protein sequence ID" value="AAT27853.1"/>
    <property type="molecule type" value="Genomic_DNA"/>
</dbReference>
<dbReference type="SMR" id="Q6KHS5"/>
<dbReference type="STRING" id="267748.MMOB3670"/>
<dbReference type="KEGG" id="mmo:MMOB3670"/>
<dbReference type="eggNOG" id="COG0480">
    <property type="taxonomic scope" value="Bacteria"/>
</dbReference>
<dbReference type="HOGENOM" id="CLU_002794_4_1_14"/>
<dbReference type="Proteomes" id="UP000009072">
    <property type="component" value="Chromosome"/>
</dbReference>
<dbReference type="GO" id="GO:0005737">
    <property type="term" value="C:cytoplasm"/>
    <property type="evidence" value="ECO:0007669"/>
    <property type="project" value="UniProtKB-SubCell"/>
</dbReference>
<dbReference type="GO" id="GO:0005525">
    <property type="term" value="F:GTP binding"/>
    <property type="evidence" value="ECO:0007669"/>
    <property type="project" value="UniProtKB-UniRule"/>
</dbReference>
<dbReference type="GO" id="GO:0003924">
    <property type="term" value="F:GTPase activity"/>
    <property type="evidence" value="ECO:0007669"/>
    <property type="project" value="InterPro"/>
</dbReference>
<dbReference type="GO" id="GO:0003746">
    <property type="term" value="F:translation elongation factor activity"/>
    <property type="evidence" value="ECO:0007669"/>
    <property type="project" value="UniProtKB-UniRule"/>
</dbReference>
<dbReference type="GO" id="GO:0032790">
    <property type="term" value="P:ribosome disassembly"/>
    <property type="evidence" value="ECO:0007669"/>
    <property type="project" value="TreeGrafter"/>
</dbReference>
<dbReference type="CDD" id="cd01886">
    <property type="entry name" value="EF-G"/>
    <property type="match status" value="1"/>
</dbReference>
<dbReference type="CDD" id="cd16262">
    <property type="entry name" value="EFG_III"/>
    <property type="match status" value="1"/>
</dbReference>
<dbReference type="CDD" id="cd01434">
    <property type="entry name" value="EFG_mtEFG1_IV"/>
    <property type="match status" value="1"/>
</dbReference>
<dbReference type="CDD" id="cd03713">
    <property type="entry name" value="EFG_mtEFG_C"/>
    <property type="match status" value="1"/>
</dbReference>
<dbReference type="CDD" id="cd04088">
    <property type="entry name" value="EFG_mtEFG_II"/>
    <property type="match status" value="1"/>
</dbReference>
<dbReference type="FunFam" id="2.40.30.10:FF:000006">
    <property type="entry name" value="Elongation factor G"/>
    <property type="match status" value="1"/>
</dbReference>
<dbReference type="FunFam" id="3.30.230.10:FF:000003">
    <property type="entry name" value="Elongation factor G"/>
    <property type="match status" value="1"/>
</dbReference>
<dbReference type="FunFam" id="3.30.70.240:FF:000001">
    <property type="entry name" value="Elongation factor G"/>
    <property type="match status" value="1"/>
</dbReference>
<dbReference type="FunFam" id="3.30.70.870:FF:000001">
    <property type="entry name" value="Elongation factor G"/>
    <property type="match status" value="1"/>
</dbReference>
<dbReference type="FunFam" id="3.40.50.300:FF:000029">
    <property type="entry name" value="Elongation factor G"/>
    <property type="match status" value="1"/>
</dbReference>
<dbReference type="Gene3D" id="3.30.230.10">
    <property type="match status" value="1"/>
</dbReference>
<dbReference type="Gene3D" id="3.30.70.240">
    <property type="match status" value="1"/>
</dbReference>
<dbReference type="Gene3D" id="3.30.70.870">
    <property type="entry name" value="Elongation Factor G (Translational Gtpase), domain 3"/>
    <property type="match status" value="1"/>
</dbReference>
<dbReference type="Gene3D" id="3.40.50.300">
    <property type="entry name" value="P-loop containing nucleotide triphosphate hydrolases"/>
    <property type="match status" value="1"/>
</dbReference>
<dbReference type="Gene3D" id="2.40.30.10">
    <property type="entry name" value="Translation factors"/>
    <property type="match status" value="1"/>
</dbReference>
<dbReference type="HAMAP" id="MF_00054_B">
    <property type="entry name" value="EF_G_EF_2_B"/>
    <property type="match status" value="1"/>
</dbReference>
<dbReference type="InterPro" id="IPR041095">
    <property type="entry name" value="EFG_II"/>
</dbReference>
<dbReference type="InterPro" id="IPR009022">
    <property type="entry name" value="EFG_III"/>
</dbReference>
<dbReference type="InterPro" id="IPR035647">
    <property type="entry name" value="EFG_III/V"/>
</dbReference>
<dbReference type="InterPro" id="IPR047872">
    <property type="entry name" value="EFG_IV"/>
</dbReference>
<dbReference type="InterPro" id="IPR035649">
    <property type="entry name" value="EFG_V"/>
</dbReference>
<dbReference type="InterPro" id="IPR000640">
    <property type="entry name" value="EFG_V-like"/>
</dbReference>
<dbReference type="InterPro" id="IPR004161">
    <property type="entry name" value="EFTu-like_2"/>
</dbReference>
<dbReference type="InterPro" id="IPR031157">
    <property type="entry name" value="G_TR_CS"/>
</dbReference>
<dbReference type="InterPro" id="IPR027417">
    <property type="entry name" value="P-loop_NTPase"/>
</dbReference>
<dbReference type="InterPro" id="IPR020568">
    <property type="entry name" value="Ribosomal_Su5_D2-typ_SF"/>
</dbReference>
<dbReference type="InterPro" id="IPR014721">
    <property type="entry name" value="Ribsml_uS5_D2-typ_fold_subgr"/>
</dbReference>
<dbReference type="InterPro" id="IPR005225">
    <property type="entry name" value="Small_GTP-bd"/>
</dbReference>
<dbReference type="InterPro" id="IPR000795">
    <property type="entry name" value="T_Tr_GTP-bd_dom"/>
</dbReference>
<dbReference type="InterPro" id="IPR009000">
    <property type="entry name" value="Transl_B-barrel_sf"/>
</dbReference>
<dbReference type="InterPro" id="IPR004540">
    <property type="entry name" value="Transl_elong_EFG/EF2"/>
</dbReference>
<dbReference type="InterPro" id="IPR005517">
    <property type="entry name" value="Transl_elong_EFG/EF2_IV"/>
</dbReference>
<dbReference type="NCBIfam" id="TIGR00484">
    <property type="entry name" value="EF-G"/>
    <property type="match status" value="1"/>
</dbReference>
<dbReference type="NCBIfam" id="NF009381">
    <property type="entry name" value="PRK12740.1-5"/>
    <property type="match status" value="1"/>
</dbReference>
<dbReference type="NCBIfam" id="TIGR00231">
    <property type="entry name" value="small_GTP"/>
    <property type="match status" value="1"/>
</dbReference>
<dbReference type="PANTHER" id="PTHR43261:SF1">
    <property type="entry name" value="RIBOSOME-RELEASING FACTOR 2, MITOCHONDRIAL"/>
    <property type="match status" value="1"/>
</dbReference>
<dbReference type="PANTHER" id="PTHR43261">
    <property type="entry name" value="TRANSLATION ELONGATION FACTOR G-RELATED"/>
    <property type="match status" value="1"/>
</dbReference>
<dbReference type="Pfam" id="PF00679">
    <property type="entry name" value="EFG_C"/>
    <property type="match status" value="1"/>
</dbReference>
<dbReference type="Pfam" id="PF14492">
    <property type="entry name" value="EFG_III"/>
    <property type="match status" value="1"/>
</dbReference>
<dbReference type="Pfam" id="PF03764">
    <property type="entry name" value="EFG_IV"/>
    <property type="match status" value="1"/>
</dbReference>
<dbReference type="Pfam" id="PF00009">
    <property type="entry name" value="GTP_EFTU"/>
    <property type="match status" value="1"/>
</dbReference>
<dbReference type="Pfam" id="PF03144">
    <property type="entry name" value="GTP_EFTU_D2"/>
    <property type="match status" value="1"/>
</dbReference>
<dbReference type="PRINTS" id="PR00315">
    <property type="entry name" value="ELONGATNFCT"/>
</dbReference>
<dbReference type="SMART" id="SM00838">
    <property type="entry name" value="EFG_C"/>
    <property type="match status" value="1"/>
</dbReference>
<dbReference type="SMART" id="SM00889">
    <property type="entry name" value="EFG_IV"/>
    <property type="match status" value="1"/>
</dbReference>
<dbReference type="SUPFAM" id="SSF54980">
    <property type="entry name" value="EF-G C-terminal domain-like"/>
    <property type="match status" value="2"/>
</dbReference>
<dbReference type="SUPFAM" id="SSF52540">
    <property type="entry name" value="P-loop containing nucleoside triphosphate hydrolases"/>
    <property type="match status" value="1"/>
</dbReference>
<dbReference type="SUPFAM" id="SSF54211">
    <property type="entry name" value="Ribosomal protein S5 domain 2-like"/>
    <property type="match status" value="1"/>
</dbReference>
<dbReference type="SUPFAM" id="SSF50447">
    <property type="entry name" value="Translation proteins"/>
    <property type="match status" value="1"/>
</dbReference>
<dbReference type="PROSITE" id="PS00301">
    <property type="entry name" value="G_TR_1"/>
    <property type="match status" value="1"/>
</dbReference>
<dbReference type="PROSITE" id="PS51722">
    <property type="entry name" value="G_TR_2"/>
    <property type="match status" value="1"/>
</dbReference>